<evidence type="ECO:0000255" key="1">
    <source>
        <dbReference type="HAMAP-Rule" id="MF_00051"/>
    </source>
</evidence>
<dbReference type="EC" id="2.1.2.1" evidence="1"/>
<dbReference type="EMBL" id="CP000786">
    <property type="protein sequence ID" value="ABZ97130.1"/>
    <property type="molecule type" value="Genomic_DNA"/>
</dbReference>
<dbReference type="RefSeq" id="WP_012388012.1">
    <property type="nucleotide sequence ID" value="NC_010602.1"/>
</dbReference>
<dbReference type="SMR" id="B0SMI6"/>
<dbReference type="STRING" id="456481.LEPBI_I1006"/>
<dbReference type="KEGG" id="lbi:LEPBI_I1006"/>
<dbReference type="HOGENOM" id="CLU_022477_2_1_12"/>
<dbReference type="OrthoDB" id="9803846at2"/>
<dbReference type="BioCyc" id="LBIF456481:LEPBI_RS04945-MONOMER"/>
<dbReference type="UniPathway" id="UPA00193"/>
<dbReference type="UniPathway" id="UPA00288">
    <property type="reaction ID" value="UER01023"/>
</dbReference>
<dbReference type="Proteomes" id="UP000001847">
    <property type="component" value="Chromosome I"/>
</dbReference>
<dbReference type="GO" id="GO:0005829">
    <property type="term" value="C:cytosol"/>
    <property type="evidence" value="ECO:0007669"/>
    <property type="project" value="TreeGrafter"/>
</dbReference>
<dbReference type="GO" id="GO:0004372">
    <property type="term" value="F:glycine hydroxymethyltransferase activity"/>
    <property type="evidence" value="ECO:0007669"/>
    <property type="project" value="UniProtKB-UniRule"/>
</dbReference>
<dbReference type="GO" id="GO:0030170">
    <property type="term" value="F:pyridoxal phosphate binding"/>
    <property type="evidence" value="ECO:0007669"/>
    <property type="project" value="UniProtKB-UniRule"/>
</dbReference>
<dbReference type="GO" id="GO:0019264">
    <property type="term" value="P:glycine biosynthetic process from serine"/>
    <property type="evidence" value="ECO:0007669"/>
    <property type="project" value="UniProtKB-UniRule"/>
</dbReference>
<dbReference type="GO" id="GO:0035999">
    <property type="term" value="P:tetrahydrofolate interconversion"/>
    <property type="evidence" value="ECO:0007669"/>
    <property type="project" value="UniProtKB-UniRule"/>
</dbReference>
<dbReference type="CDD" id="cd00378">
    <property type="entry name" value="SHMT"/>
    <property type="match status" value="1"/>
</dbReference>
<dbReference type="FunFam" id="3.40.640.10:FF:000001">
    <property type="entry name" value="Serine hydroxymethyltransferase"/>
    <property type="match status" value="1"/>
</dbReference>
<dbReference type="FunFam" id="3.90.1150.10:FF:000003">
    <property type="entry name" value="Serine hydroxymethyltransferase"/>
    <property type="match status" value="1"/>
</dbReference>
<dbReference type="Gene3D" id="3.90.1150.10">
    <property type="entry name" value="Aspartate Aminotransferase, domain 1"/>
    <property type="match status" value="1"/>
</dbReference>
<dbReference type="Gene3D" id="3.40.640.10">
    <property type="entry name" value="Type I PLP-dependent aspartate aminotransferase-like (Major domain)"/>
    <property type="match status" value="1"/>
</dbReference>
<dbReference type="HAMAP" id="MF_00051">
    <property type="entry name" value="SHMT"/>
    <property type="match status" value="1"/>
</dbReference>
<dbReference type="InterPro" id="IPR015424">
    <property type="entry name" value="PyrdxlP-dep_Trfase"/>
</dbReference>
<dbReference type="InterPro" id="IPR015421">
    <property type="entry name" value="PyrdxlP-dep_Trfase_major"/>
</dbReference>
<dbReference type="InterPro" id="IPR015422">
    <property type="entry name" value="PyrdxlP-dep_Trfase_small"/>
</dbReference>
<dbReference type="InterPro" id="IPR001085">
    <property type="entry name" value="Ser_HO-MeTrfase"/>
</dbReference>
<dbReference type="InterPro" id="IPR049943">
    <property type="entry name" value="Ser_HO-MeTrfase-like"/>
</dbReference>
<dbReference type="InterPro" id="IPR019798">
    <property type="entry name" value="Ser_HO-MeTrfase_PLP_BS"/>
</dbReference>
<dbReference type="InterPro" id="IPR039429">
    <property type="entry name" value="SHMT-like_dom"/>
</dbReference>
<dbReference type="NCBIfam" id="NF000586">
    <property type="entry name" value="PRK00011.1"/>
    <property type="match status" value="1"/>
</dbReference>
<dbReference type="PANTHER" id="PTHR11680">
    <property type="entry name" value="SERINE HYDROXYMETHYLTRANSFERASE"/>
    <property type="match status" value="1"/>
</dbReference>
<dbReference type="PANTHER" id="PTHR11680:SF35">
    <property type="entry name" value="SERINE HYDROXYMETHYLTRANSFERASE 1"/>
    <property type="match status" value="1"/>
</dbReference>
<dbReference type="Pfam" id="PF00464">
    <property type="entry name" value="SHMT"/>
    <property type="match status" value="1"/>
</dbReference>
<dbReference type="PIRSF" id="PIRSF000412">
    <property type="entry name" value="SHMT"/>
    <property type="match status" value="1"/>
</dbReference>
<dbReference type="SUPFAM" id="SSF53383">
    <property type="entry name" value="PLP-dependent transferases"/>
    <property type="match status" value="1"/>
</dbReference>
<dbReference type="PROSITE" id="PS00096">
    <property type="entry name" value="SHMT"/>
    <property type="match status" value="1"/>
</dbReference>
<sequence length="416" mass="45246">MSYLEKQDPEVYAALKKEDERQEHSLEMIASENFVSRPVLEAYHSTLTNKYAEGYPGKRYYNGCENADRVEELAIERAKKMFGAEYANVQPHSGAQANMAVFLATLEPGDSFLGMNLAHGGHLTHGSAVNISGKYFKPIPYGVDEKTETINYDEVAKLAKEHKPKLIVVGASAYPRVIDFNKFREIADGIGAKIMADIAHISGLVVAGEHPSPIGVCDFVTTTTHKTLRGPRGGLILSSSEHEKILNSRVFPGIQGGPLMHVIAAKAVAFGEALQPDFKTYIKQVVKNAKTLAEVFQKRGFRVVSGGTDNHIVLLDVSVKGLTGKDAADGLDHIGVTVNKNAIPFDKNPPAVASGIRLGTPALTTRGLKEKEIEAVGNLICDYLEHFGDTSFESKVKAAVKEITGAFPMNHFRLED</sequence>
<proteinExistence type="inferred from homology"/>
<keyword id="KW-0028">Amino-acid biosynthesis</keyword>
<keyword id="KW-0963">Cytoplasm</keyword>
<keyword id="KW-0554">One-carbon metabolism</keyword>
<keyword id="KW-0663">Pyridoxal phosphate</keyword>
<keyword id="KW-1185">Reference proteome</keyword>
<keyword id="KW-0808">Transferase</keyword>
<reference key="1">
    <citation type="journal article" date="2008" name="PLoS ONE">
        <title>Genome sequence of the saprophyte Leptospira biflexa provides insights into the evolution of Leptospira and the pathogenesis of leptospirosis.</title>
        <authorList>
            <person name="Picardeau M."/>
            <person name="Bulach D.M."/>
            <person name="Bouchier C."/>
            <person name="Zuerner R.L."/>
            <person name="Zidane N."/>
            <person name="Wilson P.J."/>
            <person name="Creno S."/>
            <person name="Kuczek E.S."/>
            <person name="Bommezzadri S."/>
            <person name="Davis J.C."/>
            <person name="McGrath A."/>
            <person name="Johnson M.J."/>
            <person name="Boursaux-Eude C."/>
            <person name="Seemann T."/>
            <person name="Rouy Z."/>
            <person name="Coppel R.L."/>
            <person name="Rood J.I."/>
            <person name="Lajus A."/>
            <person name="Davies J.K."/>
            <person name="Medigue C."/>
            <person name="Adler B."/>
        </authorList>
    </citation>
    <scope>NUCLEOTIDE SEQUENCE [LARGE SCALE GENOMIC DNA]</scope>
    <source>
        <strain>Patoc 1 / ATCC 23582 / Paris</strain>
    </source>
</reference>
<organism>
    <name type="scientific">Leptospira biflexa serovar Patoc (strain Patoc 1 / ATCC 23582 / Paris)</name>
    <dbReference type="NCBI Taxonomy" id="456481"/>
    <lineage>
        <taxon>Bacteria</taxon>
        <taxon>Pseudomonadati</taxon>
        <taxon>Spirochaetota</taxon>
        <taxon>Spirochaetia</taxon>
        <taxon>Leptospirales</taxon>
        <taxon>Leptospiraceae</taxon>
        <taxon>Leptospira</taxon>
    </lineage>
</organism>
<accession>B0SMI6</accession>
<feature type="chain" id="PRO_1000091554" description="Serine hydroxymethyltransferase">
    <location>
        <begin position="1"/>
        <end position="416"/>
    </location>
</feature>
<feature type="binding site" evidence="1">
    <location>
        <position position="117"/>
    </location>
    <ligand>
        <name>(6S)-5,6,7,8-tetrahydrofolate</name>
        <dbReference type="ChEBI" id="CHEBI:57453"/>
    </ligand>
</feature>
<feature type="binding site" evidence="1">
    <location>
        <begin position="121"/>
        <end position="123"/>
    </location>
    <ligand>
        <name>(6S)-5,6,7,8-tetrahydrofolate</name>
        <dbReference type="ChEBI" id="CHEBI:57453"/>
    </ligand>
</feature>
<feature type="site" description="Plays an important role in substrate specificity" evidence="1">
    <location>
        <position position="225"/>
    </location>
</feature>
<feature type="modified residue" description="N6-(pyridoxal phosphate)lysine" evidence="1">
    <location>
        <position position="226"/>
    </location>
</feature>
<name>GLYA_LEPBP</name>
<comment type="function">
    <text evidence="1">Catalyzes the reversible interconversion of serine and glycine with tetrahydrofolate (THF) serving as the one-carbon carrier. This reaction serves as the major source of one-carbon groups required for the biosynthesis of purines, thymidylate, methionine, and other important biomolecules. Also exhibits THF-independent aldolase activity toward beta-hydroxyamino acids, producing glycine and aldehydes, via a retro-aldol mechanism.</text>
</comment>
<comment type="catalytic activity">
    <reaction evidence="1">
        <text>(6R)-5,10-methylene-5,6,7,8-tetrahydrofolate + glycine + H2O = (6S)-5,6,7,8-tetrahydrofolate + L-serine</text>
        <dbReference type="Rhea" id="RHEA:15481"/>
        <dbReference type="ChEBI" id="CHEBI:15377"/>
        <dbReference type="ChEBI" id="CHEBI:15636"/>
        <dbReference type="ChEBI" id="CHEBI:33384"/>
        <dbReference type="ChEBI" id="CHEBI:57305"/>
        <dbReference type="ChEBI" id="CHEBI:57453"/>
        <dbReference type="EC" id="2.1.2.1"/>
    </reaction>
</comment>
<comment type="cofactor">
    <cofactor evidence="1">
        <name>pyridoxal 5'-phosphate</name>
        <dbReference type="ChEBI" id="CHEBI:597326"/>
    </cofactor>
</comment>
<comment type="pathway">
    <text evidence="1">One-carbon metabolism; tetrahydrofolate interconversion.</text>
</comment>
<comment type="pathway">
    <text evidence="1">Amino-acid biosynthesis; glycine biosynthesis; glycine from L-serine: step 1/1.</text>
</comment>
<comment type="subunit">
    <text evidence="1">Homodimer.</text>
</comment>
<comment type="subcellular location">
    <subcellularLocation>
        <location evidence="1">Cytoplasm</location>
    </subcellularLocation>
</comment>
<comment type="similarity">
    <text evidence="1">Belongs to the SHMT family.</text>
</comment>
<protein>
    <recommendedName>
        <fullName evidence="1">Serine hydroxymethyltransferase</fullName>
        <shortName evidence="1">SHMT</shortName>
        <shortName evidence="1">Serine methylase</shortName>
        <ecNumber evidence="1">2.1.2.1</ecNumber>
    </recommendedName>
</protein>
<gene>
    <name evidence="1" type="primary">glyA</name>
    <name type="ordered locus">LEPBI_I1006</name>
</gene>